<protein>
    <recommendedName>
        <fullName evidence="1">Small ribosomal subunit protein bS20</fullName>
    </recommendedName>
    <alternativeName>
        <fullName evidence="3">30S ribosomal protein S20</fullName>
    </alternativeName>
</protein>
<name>RS20_SHESM</name>
<dbReference type="EMBL" id="CP000446">
    <property type="protein sequence ID" value="ABI40031.1"/>
    <property type="molecule type" value="Genomic_DNA"/>
</dbReference>
<dbReference type="RefSeq" id="WP_011623708.1">
    <property type="nucleotide sequence ID" value="NC_008321.1"/>
</dbReference>
<dbReference type="SMR" id="Q0HFY6"/>
<dbReference type="GeneID" id="94729060"/>
<dbReference type="KEGG" id="she:Shewmr4_2960"/>
<dbReference type="HOGENOM" id="CLU_160655_4_0_6"/>
<dbReference type="GO" id="GO:0005829">
    <property type="term" value="C:cytosol"/>
    <property type="evidence" value="ECO:0007669"/>
    <property type="project" value="TreeGrafter"/>
</dbReference>
<dbReference type="GO" id="GO:0015935">
    <property type="term" value="C:small ribosomal subunit"/>
    <property type="evidence" value="ECO:0007669"/>
    <property type="project" value="TreeGrafter"/>
</dbReference>
<dbReference type="GO" id="GO:0070181">
    <property type="term" value="F:small ribosomal subunit rRNA binding"/>
    <property type="evidence" value="ECO:0007669"/>
    <property type="project" value="TreeGrafter"/>
</dbReference>
<dbReference type="GO" id="GO:0003735">
    <property type="term" value="F:structural constituent of ribosome"/>
    <property type="evidence" value="ECO:0007669"/>
    <property type="project" value="InterPro"/>
</dbReference>
<dbReference type="GO" id="GO:0006412">
    <property type="term" value="P:translation"/>
    <property type="evidence" value="ECO:0007669"/>
    <property type="project" value="UniProtKB-UniRule"/>
</dbReference>
<dbReference type="FunFam" id="1.20.58.110:FF:000001">
    <property type="entry name" value="30S ribosomal protein S20"/>
    <property type="match status" value="1"/>
</dbReference>
<dbReference type="Gene3D" id="1.20.58.110">
    <property type="entry name" value="Ribosomal protein S20"/>
    <property type="match status" value="1"/>
</dbReference>
<dbReference type="HAMAP" id="MF_00500">
    <property type="entry name" value="Ribosomal_bS20"/>
    <property type="match status" value="1"/>
</dbReference>
<dbReference type="InterPro" id="IPR002583">
    <property type="entry name" value="Ribosomal_bS20"/>
</dbReference>
<dbReference type="InterPro" id="IPR036510">
    <property type="entry name" value="Ribosomal_bS20_sf"/>
</dbReference>
<dbReference type="NCBIfam" id="TIGR00029">
    <property type="entry name" value="S20"/>
    <property type="match status" value="1"/>
</dbReference>
<dbReference type="PANTHER" id="PTHR33398">
    <property type="entry name" value="30S RIBOSOMAL PROTEIN S20"/>
    <property type="match status" value="1"/>
</dbReference>
<dbReference type="PANTHER" id="PTHR33398:SF1">
    <property type="entry name" value="SMALL RIBOSOMAL SUBUNIT PROTEIN BS20C"/>
    <property type="match status" value="1"/>
</dbReference>
<dbReference type="Pfam" id="PF01649">
    <property type="entry name" value="Ribosomal_S20p"/>
    <property type="match status" value="1"/>
</dbReference>
<dbReference type="SUPFAM" id="SSF46992">
    <property type="entry name" value="Ribosomal protein S20"/>
    <property type="match status" value="1"/>
</dbReference>
<sequence length="88" mass="9701">MANSKSAKKRALQSEKRRQHNASRRSMLRTYVKKVIAAIKAGDHKTATEAFAAAQPIVDRMATKGLIHKNKAARHKARLNAKIKALAA</sequence>
<accession>Q0HFY6</accession>
<evidence type="ECO:0000255" key="1">
    <source>
        <dbReference type="HAMAP-Rule" id="MF_00500"/>
    </source>
</evidence>
<evidence type="ECO:0000256" key="2">
    <source>
        <dbReference type="SAM" id="MobiDB-lite"/>
    </source>
</evidence>
<evidence type="ECO:0000305" key="3"/>
<organism>
    <name type="scientific">Shewanella sp. (strain MR-4)</name>
    <dbReference type="NCBI Taxonomy" id="60480"/>
    <lineage>
        <taxon>Bacteria</taxon>
        <taxon>Pseudomonadati</taxon>
        <taxon>Pseudomonadota</taxon>
        <taxon>Gammaproteobacteria</taxon>
        <taxon>Alteromonadales</taxon>
        <taxon>Shewanellaceae</taxon>
        <taxon>Shewanella</taxon>
    </lineage>
</organism>
<gene>
    <name evidence="1" type="primary">rpsT</name>
    <name type="ordered locus">Shewmr4_2960</name>
</gene>
<feature type="chain" id="PRO_1000014655" description="Small ribosomal subunit protein bS20">
    <location>
        <begin position="1"/>
        <end position="88"/>
    </location>
</feature>
<feature type="region of interest" description="Disordered" evidence="2">
    <location>
        <begin position="1"/>
        <end position="27"/>
    </location>
</feature>
<keyword id="KW-0687">Ribonucleoprotein</keyword>
<keyword id="KW-0689">Ribosomal protein</keyword>
<keyword id="KW-0694">RNA-binding</keyword>
<keyword id="KW-0699">rRNA-binding</keyword>
<reference key="1">
    <citation type="submission" date="2006-08" db="EMBL/GenBank/DDBJ databases">
        <title>Complete sequence of Shewanella sp. MR-4.</title>
        <authorList>
            <consortium name="US DOE Joint Genome Institute"/>
            <person name="Copeland A."/>
            <person name="Lucas S."/>
            <person name="Lapidus A."/>
            <person name="Barry K."/>
            <person name="Detter J.C."/>
            <person name="Glavina del Rio T."/>
            <person name="Hammon N."/>
            <person name="Israni S."/>
            <person name="Dalin E."/>
            <person name="Tice H."/>
            <person name="Pitluck S."/>
            <person name="Kiss H."/>
            <person name="Brettin T."/>
            <person name="Bruce D."/>
            <person name="Han C."/>
            <person name="Tapia R."/>
            <person name="Gilna P."/>
            <person name="Schmutz J."/>
            <person name="Larimer F."/>
            <person name="Land M."/>
            <person name="Hauser L."/>
            <person name="Kyrpides N."/>
            <person name="Mikhailova N."/>
            <person name="Nealson K."/>
            <person name="Konstantinidis K."/>
            <person name="Klappenbach J."/>
            <person name="Tiedje J."/>
            <person name="Richardson P."/>
        </authorList>
    </citation>
    <scope>NUCLEOTIDE SEQUENCE [LARGE SCALE GENOMIC DNA]</scope>
    <source>
        <strain>MR-4</strain>
    </source>
</reference>
<comment type="function">
    <text evidence="1">Binds directly to 16S ribosomal RNA.</text>
</comment>
<comment type="similarity">
    <text evidence="1">Belongs to the bacterial ribosomal protein bS20 family.</text>
</comment>
<proteinExistence type="inferred from homology"/>